<sequence>MDIIKKNKKIIILVCLMFLAIMVYIYKSNGPDKTNDNILEVKITIKDHKFVPNIVEVPKSTKIRLIIHNADDTIEEFESHDLHREKIVMPHESINIILAPLKPGKYEIFGDFHQDTAQGFIIVND</sequence>
<dbReference type="EMBL" id="AJ235271">
    <property type="protein sequence ID" value="CAA14851.1"/>
    <property type="molecule type" value="Genomic_DNA"/>
</dbReference>
<dbReference type="PIR" id="A71697">
    <property type="entry name" value="A71697"/>
</dbReference>
<dbReference type="RefSeq" id="NP_220775.1">
    <property type="nucleotide sequence ID" value="NC_000963.1"/>
</dbReference>
<dbReference type="RefSeq" id="WP_004599447.1">
    <property type="nucleotide sequence ID" value="NC_000963.1"/>
</dbReference>
<dbReference type="SMR" id="Q9ZDD7"/>
<dbReference type="STRING" id="272947.gene:17555474"/>
<dbReference type="EnsemblBacteria" id="CAA14851">
    <property type="protein sequence ID" value="CAA14851"/>
    <property type="gene ID" value="CAA14851"/>
</dbReference>
<dbReference type="KEGG" id="rpr:RP394"/>
<dbReference type="PATRIC" id="fig|272947.5.peg.407"/>
<dbReference type="eggNOG" id="COG4633">
    <property type="taxonomic scope" value="Bacteria"/>
</dbReference>
<dbReference type="HOGENOM" id="CLU_157112_2_0_5"/>
<dbReference type="OrthoDB" id="7161040at2"/>
<dbReference type="Proteomes" id="UP000002480">
    <property type="component" value="Chromosome"/>
</dbReference>
<dbReference type="GO" id="GO:0016020">
    <property type="term" value="C:membrane"/>
    <property type="evidence" value="ECO:0007669"/>
    <property type="project" value="UniProtKB-SubCell"/>
</dbReference>
<dbReference type="CDD" id="cd04203">
    <property type="entry name" value="Cupredoxin_like_3"/>
    <property type="match status" value="1"/>
</dbReference>
<dbReference type="Gene3D" id="2.60.40.420">
    <property type="entry name" value="Cupredoxins - blue copper proteins"/>
    <property type="match status" value="1"/>
</dbReference>
<dbReference type="InterPro" id="IPR008972">
    <property type="entry name" value="Cupredoxin"/>
</dbReference>
<dbReference type="InterPro" id="IPR028096">
    <property type="entry name" value="EfeO_Cupredoxin"/>
</dbReference>
<dbReference type="Pfam" id="PF13473">
    <property type="entry name" value="Cupredoxin_1"/>
    <property type="match status" value="1"/>
</dbReference>
<dbReference type="SUPFAM" id="SSF49503">
    <property type="entry name" value="Cupredoxins"/>
    <property type="match status" value="1"/>
</dbReference>
<name>Y394_RICPR</name>
<accession>Q9ZDD7</accession>
<feature type="chain" id="PRO_0000101361" description="Uncharacterized protein RP394">
    <location>
        <begin position="1"/>
        <end position="125"/>
    </location>
</feature>
<feature type="transmembrane region" description="Helical" evidence="1">
    <location>
        <begin position="10"/>
        <end position="26"/>
    </location>
</feature>
<comment type="subcellular location">
    <subcellularLocation>
        <location evidence="2">Membrane</location>
        <topology evidence="2">Single-pass membrane protein</topology>
    </subcellularLocation>
</comment>
<reference key="1">
    <citation type="journal article" date="1998" name="Nature">
        <title>The genome sequence of Rickettsia prowazekii and the origin of mitochondria.</title>
        <authorList>
            <person name="Andersson S.G.E."/>
            <person name="Zomorodipour A."/>
            <person name="Andersson J.O."/>
            <person name="Sicheritz-Ponten T."/>
            <person name="Alsmark U.C.M."/>
            <person name="Podowski R.M."/>
            <person name="Naeslund A.K."/>
            <person name="Eriksson A.-S."/>
            <person name="Winkler H.H."/>
            <person name="Kurland C.G."/>
        </authorList>
    </citation>
    <scope>NUCLEOTIDE SEQUENCE [LARGE SCALE GENOMIC DNA]</scope>
    <source>
        <strain>Madrid E</strain>
    </source>
</reference>
<organism>
    <name type="scientific">Rickettsia prowazekii (strain Madrid E)</name>
    <dbReference type="NCBI Taxonomy" id="272947"/>
    <lineage>
        <taxon>Bacteria</taxon>
        <taxon>Pseudomonadati</taxon>
        <taxon>Pseudomonadota</taxon>
        <taxon>Alphaproteobacteria</taxon>
        <taxon>Rickettsiales</taxon>
        <taxon>Rickettsiaceae</taxon>
        <taxon>Rickettsieae</taxon>
        <taxon>Rickettsia</taxon>
        <taxon>typhus group</taxon>
    </lineage>
</organism>
<evidence type="ECO:0000255" key="1"/>
<evidence type="ECO:0000305" key="2"/>
<protein>
    <recommendedName>
        <fullName>Uncharacterized protein RP394</fullName>
    </recommendedName>
</protein>
<proteinExistence type="predicted"/>
<keyword id="KW-0472">Membrane</keyword>
<keyword id="KW-1185">Reference proteome</keyword>
<keyword id="KW-0812">Transmembrane</keyword>
<keyword id="KW-1133">Transmembrane helix</keyword>
<gene>
    <name type="ordered locus">RP394</name>
</gene>